<organism>
    <name type="scientific">Physcomitrium patens</name>
    <name type="common">Spreading-leaved earth moss</name>
    <name type="synonym">Physcomitrella patens</name>
    <dbReference type="NCBI Taxonomy" id="3218"/>
    <lineage>
        <taxon>Eukaryota</taxon>
        <taxon>Viridiplantae</taxon>
        <taxon>Streptophyta</taxon>
        <taxon>Embryophyta</taxon>
        <taxon>Bryophyta</taxon>
        <taxon>Bryophytina</taxon>
        <taxon>Bryopsida</taxon>
        <taxon>Funariidae</taxon>
        <taxon>Funariales</taxon>
        <taxon>Funariaceae</taxon>
        <taxon>Physcomitrium</taxon>
    </lineage>
</organism>
<accession>Q6YXL2</accession>
<evidence type="ECO:0000255" key="1">
    <source>
        <dbReference type="HAMAP-Rule" id="MF_00075"/>
    </source>
</evidence>
<feature type="chain" id="PRO_0000095945" description="Translation initiation factor IF-1, chloroplastic">
    <location>
        <begin position="1"/>
        <end position="78"/>
    </location>
</feature>
<feature type="domain" description="S1-like" evidence="1">
    <location>
        <begin position="1"/>
        <end position="72"/>
    </location>
</feature>
<dbReference type="EMBL" id="AP005672">
    <property type="protein sequence ID" value="BAC85076.1"/>
    <property type="molecule type" value="Genomic_DNA"/>
</dbReference>
<dbReference type="RefSeq" id="NP_904226.1">
    <property type="nucleotide sequence ID" value="NC_005087.2"/>
</dbReference>
<dbReference type="RefSeq" id="YP_009477556.1">
    <property type="nucleotide sequence ID" value="NC_037465.1"/>
</dbReference>
<dbReference type="SMR" id="Q6YXL2"/>
<dbReference type="STRING" id="3218.Q6YXL2"/>
<dbReference type="GeneID" id="2546743"/>
<dbReference type="GeneID" id="36487190"/>
<dbReference type="KEGG" id="ppp:2546743"/>
<dbReference type="InParanoid" id="Q6YXL2"/>
<dbReference type="OrthoDB" id="1714886at2759"/>
<dbReference type="Proteomes" id="UP000006727">
    <property type="component" value="Chloroplast"/>
</dbReference>
<dbReference type="GO" id="GO:0009507">
    <property type="term" value="C:chloroplast"/>
    <property type="evidence" value="ECO:0007669"/>
    <property type="project" value="UniProtKB-SubCell"/>
</dbReference>
<dbReference type="GO" id="GO:0005829">
    <property type="term" value="C:cytosol"/>
    <property type="evidence" value="ECO:0000318"/>
    <property type="project" value="GO_Central"/>
</dbReference>
<dbReference type="GO" id="GO:0043022">
    <property type="term" value="F:ribosome binding"/>
    <property type="evidence" value="ECO:0000318"/>
    <property type="project" value="GO_Central"/>
</dbReference>
<dbReference type="GO" id="GO:0019843">
    <property type="term" value="F:rRNA binding"/>
    <property type="evidence" value="ECO:0007669"/>
    <property type="project" value="UniProtKB-UniRule"/>
</dbReference>
<dbReference type="GO" id="GO:0003743">
    <property type="term" value="F:translation initiation factor activity"/>
    <property type="evidence" value="ECO:0007669"/>
    <property type="project" value="UniProtKB-UniRule"/>
</dbReference>
<dbReference type="CDD" id="cd04451">
    <property type="entry name" value="S1_IF1"/>
    <property type="match status" value="1"/>
</dbReference>
<dbReference type="FunFam" id="2.40.50.140:FF:000002">
    <property type="entry name" value="Translation initiation factor IF-1"/>
    <property type="match status" value="1"/>
</dbReference>
<dbReference type="Gene3D" id="2.40.50.140">
    <property type="entry name" value="Nucleic acid-binding proteins"/>
    <property type="match status" value="1"/>
</dbReference>
<dbReference type="HAMAP" id="MF_00075">
    <property type="entry name" value="IF_1"/>
    <property type="match status" value="1"/>
</dbReference>
<dbReference type="InterPro" id="IPR012340">
    <property type="entry name" value="NA-bd_OB-fold"/>
</dbReference>
<dbReference type="InterPro" id="IPR006196">
    <property type="entry name" value="RNA-binding_domain_S1_IF1"/>
</dbReference>
<dbReference type="InterPro" id="IPR003029">
    <property type="entry name" value="S1_domain"/>
</dbReference>
<dbReference type="InterPro" id="IPR004368">
    <property type="entry name" value="TIF_IF1"/>
</dbReference>
<dbReference type="NCBIfam" id="TIGR00008">
    <property type="entry name" value="infA"/>
    <property type="match status" value="1"/>
</dbReference>
<dbReference type="PANTHER" id="PTHR33370">
    <property type="entry name" value="TRANSLATION INITIATION FACTOR IF-1, CHLOROPLASTIC"/>
    <property type="match status" value="1"/>
</dbReference>
<dbReference type="PANTHER" id="PTHR33370:SF1">
    <property type="entry name" value="TRANSLATION INITIATION FACTOR IF-1, CHLOROPLASTIC"/>
    <property type="match status" value="1"/>
</dbReference>
<dbReference type="Pfam" id="PF01176">
    <property type="entry name" value="eIF-1a"/>
    <property type="match status" value="1"/>
</dbReference>
<dbReference type="SMART" id="SM00316">
    <property type="entry name" value="S1"/>
    <property type="match status" value="1"/>
</dbReference>
<dbReference type="SUPFAM" id="SSF50249">
    <property type="entry name" value="Nucleic acid-binding proteins"/>
    <property type="match status" value="1"/>
</dbReference>
<dbReference type="PROSITE" id="PS50832">
    <property type="entry name" value="S1_IF1_TYPE"/>
    <property type="match status" value="1"/>
</dbReference>
<reference key="1">
    <citation type="journal article" date="2003" name="Nucleic Acids Res.">
        <title>Complete chloroplast DNA sequence of the moss Physcomitrella patens: evidence for the loss and relocation of rpoA from the chloroplast to the nucleus.</title>
        <authorList>
            <person name="Sugiura C."/>
            <person name="Kobayashi Y."/>
            <person name="Setsuyuki A."/>
            <person name="Sugita C."/>
            <person name="Sugita M."/>
        </authorList>
    </citation>
    <scope>NUCLEOTIDE SEQUENCE [LARGE SCALE GENOMIC DNA]</scope>
    <source>
        <strain>cv. Gransden 2004</strain>
    </source>
</reference>
<name>IF1C_PHYPA</name>
<sequence length="78" mass="8924">MKKQNLIDMEGVVTESLPNAMFRVCLDNGCEVLTHISGKIRRNYIRILPGDRVKVELTPYDLTKGRITYRLRAKSSNS</sequence>
<proteinExistence type="inferred from homology"/>
<geneLocation type="chloroplast"/>
<gene>
    <name evidence="1" type="primary">infA</name>
</gene>
<comment type="function">
    <text evidence="1">One of the essential components for the initiation of protein synthesis. Stabilizes the binding of IF-2 and IF-3 on the 30S subunit to which N-formylmethionyl-tRNA(fMet) subsequently binds. Helps modulate mRNA selection, yielding the 30S pre-initiation complex (PIC). Upon addition of the 50S ribosomal subunit IF-1, IF-2 and IF-3 are released leaving the mature 70S translation initiation complex.</text>
</comment>
<comment type="subunit">
    <text evidence="1">Component of the 30S ribosomal translation pre-initiation complex which assembles on the 30S ribosome in the order IF-2 and IF-3, IF-1 and N-formylmethionyl-tRNA(fMet); mRNA recruitment can occur at any time during PIC assembly.</text>
</comment>
<comment type="subcellular location">
    <subcellularLocation>
        <location evidence="1">Plastid</location>
        <location evidence="1">Chloroplast</location>
    </subcellularLocation>
</comment>
<comment type="similarity">
    <text evidence="1">Belongs to the IF-1 family.</text>
</comment>
<keyword id="KW-0150">Chloroplast</keyword>
<keyword id="KW-0396">Initiation factor</keyword>
<keyword id="KW-0934">Plastid</keyword>
<keyword id="KW-0648">Protein biosynthesis</keyword>
<keyword id="KW-1185">Reference proteome</keyword>
<keyword id="KW-0694">RNA-binding</keyword>
<keyword id="KW-0699">rRNA-binding</keyword>
<protein>
    <recommendedName>
        <fullName evidence="1">Translation initiation factor IF-1, chloroplastic</fullName>
    </recommendedName>
</protein>